<accession>Q9D7X8</accession>
<accession>Q3URJ2</accession>
<accession>Q66JQ5</accession>
<sequence length="188" mass="21166">MASSDCEGHAGQEGETFLYFAYGSNLLTERIHLRNPSAVFCCVARLQDFKLDFGNFQGKMSERWHGGIATIFQSPGDEVWGVVWRMNKSNISSLDEQEGVKSGVYVVIEIKVSTREGKEITCRSYLMTNYESAPPSPQYKKVICMGAKENGLPQEYQEKLKAIEPNEYKGKISDEMEDIIKKGESKLS</sequence>
<protein>
    <recommendedName>
        <fullName>Gamma-glutamylcyclotransferase</fullName>
        <ecNumber evidence="2">4.3.2.9</ecNumber>
    </recommendedName>
</protein>
<dbReference type="EC" id="4.3.2.9" evidence="2"/>
<dbReference type="EMBL" id="AK008719">
    <property type="protein sequence ID" value="BAB25854.1"/>
    <property type="molecule type" value="mRNA"/>
</dbReference>
<dbReference type="EMBL" id="AK050049">
    <property type="protein sequence ID" value="BAC34049.1"/>
    <property type="molecule type" value="mRNA"/>
</dbReference>
<dbReference type="EMBL" id="AK079465">
    <property type="protein sequence ID" value="BAC37656.1"/>
    <property type="molecule type" value="mRNA"/>
</dbReference>
<dbReference type="EMBL" id="AK141474">
    <property type="protein sequence ID" value="BAE24696.1"/>
    <property type="molecule type" value="mRNA"/>
</dbReference>
<dbReference type="EMBL" id="CH466597">
    <property type="protein sequence ID" value="EDK98717.1"/>
    <property type="molecule type" value="Genomic_DNA"/>
</dbReference>
<dbReference type="EMBL" id="BC080818">
    <property type="protein sequence ID" value="AAH80818.1"/>
    <property type="molecule type" value="mRNA"/>
</dbReference>
<dbReference type="CCDS" id="CCDS20161.1"/>
<dbReference type="RefSeq" id="NP_080913.1">
    <property type="nucleotide sequence ID" value="NM_026637.3"/>
</dbReference>
<dbReference type="SMR" id="Q9D7X8"/>
<dbReference type="BioGRID" id="225358">
    <property type="interactions" value="6"/>
</dbReference>
<dbReference type="FunCoup" id="Q9D7X8">
    <property type="interactions" value="690"/>
</dbReference>
<dbReference type="STRING" id="10090.ENSMUSP00000120154"/>
<dbReference type="iPTMnet" id="Q9D7X8"/>
<dbReference type="PhosphoSitePlus" id="Q9D7X8"/>
<dbReference type="SwissPalm" id="Q9D7X8"/>
<dbReference type="REPRODUCTION-2DPAGE" id="Q66JQ5"/>
<dbReference type="REPRODUCTION-2DPAGE" id="Q9D7X8"/>
<dbReference type="jPOST" id="Q9D7X8"/>
<dbReference type="PaxDb" id="10090-ENSMUSP00000120154"/>
<dbReference type="PeptideAtlas" id="Q9D7X8"/>
<dbReference type="ProteomicsDB" id="268873"/>
<dbReference type="Pumba" id="Q9D7X8"/>
<dbReference type="Ensembl" id="ENSMUST00000131475.2">
    <property type="protein sequence ID" value="ENSMUSP00000120154.2"/>
    <property type="gene ID" value="ENSMUSG00000002797.10"/>
</dbReference>
<dbReference type="GeneID" id="110175"/>
<dbReference type="KEGG" id="mmu:110175"/>
<dbReference type="UCSC" id="uc009cah.1">
    <property type="organism name" value="mouse"/>
</dbReference>
<dbReference type="AGR" id="MGI:95700"/>
<dbReference type="CTD" id="79017"/>
<dbReference type="MGI" id="MGI:95700">
    <property type="gene designation" value="Ggct"/>
</dbReference>
<dbReference type="VEuPathDB" id="HostDB:ENSMUSG00000002797"/>
<dbReference type="eggNOG" id="KOG4059">
    <property type="taxonomic scope" value="Eukaryota"/>
</dbReference>
<dbReference type="GeneTree" id="ENSGT00500000044921"/>
<dbReference type="HOGENOM" id="CLU_048475_2_1_1"/>
<dbReference type="InParanoid" id="Q9D7X8"/>
<dbReference type="OMA" id="APHDYVM"/>
<dbReference type="OrthoDB" id="2924818at2759"/>
<dbReference type="PhylomeDB" id="Q9D7X8"/>
<dbReference type="TreeFam" id="TF314378"/>
<dbReference type="Reactome" id="R-MMU-174403">
    <property type="pathway name" value="Glutathione synthesis and recycling"/>
</dbReference>
<dbReference type="BioGRID-ORCS" id="110175">
    <property type="hits" value="6 hits in 78 CRISPR screens"/>
</dbReference>
<dbReference type="ChiTaRS" id="Ggct">
    <property type="organism name" value="mouse"/>
</dbReference>
<dbReference type="PRO" id="PR:Q9D7X8"/>
<dbReference type="Proteomes" id="UP000000589">
    <property type="component" value="Chromosome 6"/>
</dbReference>
<dbReference type="RNAct" id="Q9D7X8">
    <property type="molecule type" value="protein"/>
</dbReference>
<dbReference type="Bgee" id="ENSMUSG00000002797">
    <property type="expression patterns" value="Expressed in animal zygote and 263 other cell types or tissues"/>
</dbReference>
<dbReference type="ExpressionAtlas" id="Q9D7X8">
    <property type="expression patterns" value="baseline and differential"/>
</dbReference>
<dbReference type="GO" id="GO:0005829">
    <property type="term" value="C:cytosol"/>
    <property type="evidence" value="ECO:0000250"/>
    <property type="project" value="UniProtKB"/>
</dbReference>
<dbReference type="GO" id="GO:0003839">
    <property type="term" value="F:gamma-glutamylcyclotransferase activity"/>
    <property type="evidence" value="ECO:0000250"/>
    <property type="project" value="UniProtKB"/>
</dbReference>
<dbReference type="GO" id="GO:0042803">
    <property type="term" value="F:protein homodimerization activity"/>
    <property type="evidence" value="ECO:0000250"/>
    <property type="project" value="UniProtKB"/>
</dbReference>
<dbReference type="GO" id="GO:0001836">
    <property type="term" value="P:release of cytochrome c from mitochondria"/>
    <property type="evidence" value="ECO:0000250"/>
    <property type="project" value="UniProtKB"/>
</dbReference>
<dbReference type="CDD" id="cd06661">
    <property type="entry name" value="GGCT_like"/>
    <property type="match status" value="1"/>
</dbReference>
<dbReference type="FunFam" id="3.10.490.10:FF:000007">
    <property type="entry name" value="Gamma-glutamylcyclotransferase"/>
    <property type="match status" value="1"/>
</dbReference>
<dbReference type="Gene3D" id="3.10.490.10">
    <property type="entry name" value="Gamma-glutamyl cyclotransferase-like"/>
    <property type="match status" value="1"/>
</dbReference>
<dbReference type="InterPro" id="IPR017939">
    <property type="entry name" value="G-Glutamylcylcotransferase"/>
</dbReference>
<dbReference type="InterPro" id="IPR013024">
    <property type="entry name" value="GGCT-like"/>
</dbReference>
<dbReference type="InterPro" id="IPR036568">
    <property type="entry name" value="GGCT-like_sf"/>
</dbReference>
<dbReference type="PANTHER" id="PTHR12935">
    <property type="entry name" value="GAMMA-GLUTAMYLCYCLOTRANSFERASE"/>
    <property type="match status" value="1"/>
</dbReference>
<dbReference type="PANTHER" id="PTHR12935:SF0">
    <property type="entry name" value="GAMMA-GLUTAMYLCYCLOTRANSFERASE"/>
    <property type="match status" value="1"/>
</dbReference>
<dbReference type="Pfam" id="PF13772">
    <property type="entry name" value="AIG2_2"/>
    <property type="match status" value="1"/>
</dbReference>
<dbReference type="SUPFAM" id="SSF110857">
    <property type="entry name" value="Gamma-glutamyl cyclotransferase-like"/>
    <property type="match status" value="1"/>
</dbReference>
<comment type="function">
    <text evidence="2">Catalyzes the formation of 5-oxoproline from gamma-glutamyl dipeptides and may play a significant role in glutathione homeostasis. Induces release of cytochrome c from mitochondria with resultant induction of apoptosis.</text>
</comment>
<comment type="catalytic activity">
    <reaction evidence="2">
        <text>an alpha-(gamma-L-glutamyl)-L-amino acid = 5-oxo-L-proline + an L-alpha-amino acid</text>
        <dbReference type="Rhea" id="RHEA:20505"/>
        <dbReference type="ChEBI" id="CHEBI:58402"/>
        <dbReference type="ChEBI" id="CHEBI:59869"/>
        <dbReference type="ChEBI" id="CHEBI:71304"/>
        <dbReference type="EC" id="4.3.2.9"/>
    </reaction>
    <physiologicalReaction direction="left-to-right" evidence="2">
        <dbReference type="Rhea" id="RHEA:20506"/>
    </physiologicalReaction>
</comment>
<comment type="subunit">
    <text evidence="2">Homodimer.</text>
</comment>
<comment type="similarity">
    <text evidence="3">Belongs to the gamma-glutamylcyclotransferase family.</text>
</comment>
<reference key="1">
    <citation type="journal article" date="2005" name="Science">
        <title>The transcriptional landscape of the mammalian genome.</title>
        <authorList>
            <person name="Carninci P."/>
            <person name="Kasukawa T."/>
            <person name="Katayama S."/>
            <person name="Gough J."/>
            <person name="Frith M.C."/>
            <person name="Maeda N."/>
            <person name="Oyama R."/>
            <person name="Ravasi T."/>
            <person name="Lenhard B."/>
            <person name="Wells C."/>
            <person name="Kodzius R."/>
            <person name="Shimokawa K."/>
            <person name="Bajic V.B."/>
            <person name="Brenner S.E."/>
            <person name="Batalov S."/>
            <person name="Forrest A.R."/>
            <person name="Zavolan M."/>
            <person name="Davis M.J."/>
            <person name="Wilming L.G."/>
            <person name="Aidinis V."/>
            <person name="Allen J.E."/>
            <person name="Ambesi-Impiombato A."/>
            <person name="Apweiler R."/>
            <person name="Aturaliya R.N."/>
            <person name="Bailey T.L."/>
            <person name="Bansal M."/>
            <person name="Baxter L."/>
            <person name="Beisel K.W."/>
            <person name="Bersano T."/>
            <person name="Bono H."/>
            <person name="Chalk A.M."/>
            <person name="Chiu K.P."/>
            <person name="Choudhary V."/>
            <person name="Christoffels A."/>
            <person name="Clutterbuck D.R."/>
            <person name="Crowe M.L."/>
            <person name="Dalla E."/>
            <person name="Dalrymple B.P."/>
            <person name="de Bono B."/>
            <person name="Della Gatta G."/>
            <person name="di Bernardo D."/>
            <person name="Down T."/>
            <person name="Engstrom P."/>
            <person name="Fagiolini M."/>
            <person name="Faulkner G."/>
            <person name="Fletcher C.F."/>
            <person name="Fukushima T."/>
            <person name="Furuno M."/>
            <person name="Futaki S."/>
            <person name="Gariboldi M."/>
            <person name="Georgii-Hemming P."/>
            <person name="Gingeras T.R."/>
            <person name="Gojobori T."/>
            <person name="Green R.E."/>
            <person name="Gustincich S."/>
            <person name="Harbers M."/>
            <person name="Hayashi Y."/>
            <person name="Hensch T.K."/>
            <person name="Hirokawa N."/>
            <person name="Hill D."/>
            <person name="Huminiecki L."/>
            <person name="Iacono M."/>
            <person name="Ikeo K."/>
            <person name="Iwama A."/>
            <person name="Ishikawa T."/>
            <person name="Jakt M."/>
            <person name="Kanapin A."/>
            <person name="Katoh M."/>
            <person name="Kawasawa Y."/>
            <person name="Kelso J."/>
            <person name="Kitamura H."/>
            <person name="Kitano H."/>
            <person name="Kollias G."/>
            <person name="Krishnan S.P."/>
            <person name="Kruger A."/>
            <person name="Kummerfeld S.K."/>
            <person name="Kurochkin I.V."/>
            <person name="Lareau L.F."/>
            <person name="Lazarevic D."/>
            <person name="Lipovich L."/>
            <person name="Liu J."/>
            <person name="Liuni S."/>
            <person name="McWilliam S."/>
            <person name="Madan Babu M."/>
            <person name="Madera M."/>
            <person name="Marchionni L."/>
            <person name="Matsuda H."/>
            <person name="Matsuzawa S."/>
            <person name="Miki H."/>
            <person name="Mignone F."/>
            <person name="Miyake S."/>
            <person name="Morris K."/>
            <person name="Mottagui-Tabar S."/>
            <person name="Mulder N."/>
            <person name="Nakano N."/>
            <person name="Nakauchi H."/>
            <person name="Ng P."/>
            <person name="Nilsson R."/>
            <person name="Nishiguchi S."/>
            <person name="Nishikawa S."/>
            <person name="Nori F."/>
            <person name="Ohara O."/>
            <person name="Okazaki Y."/>
            <person name="Orlando V."/>
            <person name="Pang K.C."/>
            <person name="Pavan W.J."/>
            <person name="Pavesi G."/>
            <person name="Pesole G."/>
            <person name="Petrovsky N."/>
            <person name="Piazza S."/>
            <person name="Reed J."/>
            <person name="Reid J.F."/>
            <person name="Ring B.Z."/>
            <person name="Ringwald M."/>
            <person name="Rost B."/>
            <person name="Ruan Y."/>
            <person name="Salzberg S.L."/>
            <person name="Sandelin A."/>
            <person name="Schneider C."/>
            <person name="Schoenbach C."/>
            <person name="Sekiguchi K."/>
            <person name="Semple C.A."/>
            <person name="Seno S."/>
            <person name="Sessa L."/>
            <person name="Sheng Y."/>
            <person name="Shibata Y."/>
            <person name="Shimada H."/>
            <person name="Shimada K."/>
            <person name="Silva D."/>
            <person name="Sinclair B."/>
            <person name="Sperling S."/>
            <person name="Stupka E."/>
            <person name="Sugiura K."/>
            <person name="Sultana R."/>
            <person name="Takenaka Y."/>
            <person name="Taki K."/>
            <person name="Tammoja K."/>
            <person name="Tan S.L."/>
            <person name="Tang S."/>
            <person name="Taylor M.S."/>
            <person name="Tegner J."/>
            <person name="Teichmann S.A."/>
            <person name="Ueda H.R."/>
            <person name="van Nimwegen E."/>
            <person name="Verardo R."/>
            <person name="Wei C.L."/>
            <person name="Yagi K."/>
            <person name="Yamanishi H."/>
            <person name="Zabarovsky E."/>
            <person name="Zhu S."/>
            <person name="Zimmer A."/>
            <person name="Hide W."/>
            <person name="Bult C."/>
            <person name="Grimmond S.M."/>
            <person name="Teasdale R.D."/>
            <person name="Liu E.T."/>
            <person name="Brusic V."/>
            <person name="Quackenbush J."/>
            <person name="Wahlestedt C."/>
            <person name="Mattick J.S."/>
            <person name="Hume D.A."/>
            <person name="Kai C."/>
            <person name="Sasaki D."/>
            <person name="Tomaru Y."/>
            <person name="Fukuda S."/>
            <person name="Kanamori-Katayama M."/>
            <person name="Suzuki M."/>
            <person name="Aoki J."/>
            <person name="Arakawa T."/>
            <person name="Iida J."/>
            <person name="Imamura K."/>
            <person name="Itoh M."/>
            <person name="Kato T."/>
            <person name="Kawaji H."/>
            <person name="Kawagashira N."/>
            <person name="Kawashima T."/>
            <person name="Kojima M."/>
            <person name="Kondo S."/>
            <person name="Konno H."/>
            <person name="Nakano K."/>
            <person name="Ninomiya N."/>
            <person name="Nishio T."/>
            <person name="Okada M."/>
            <person name="Plessy C."/>
            <person name="Shibata K."/>
            <person name="Shiraki T."/>
            <person name="Suzuki S."/>
            <person name="Tagami M."/>
            <person name="Waki K."/>
            <person name="Watahiki A."/>
            <person name="Okamura-Oho Y."/>
            <person name="Suzuki H."/>
            <person name="Kawai J."/>
            <person name="Hayashizaki Y."/>
        </authorList>
    </citation>
    <scope>NUCLEOTIDE SEQUENCE [LARGE SCALE MRNA]</scope>
    <source>
        <strain>C57BL/6J</strain>
        <tissue>Liver</tissue>
        <tissue>Skin</tissue>
        <tissue>Spinal cord</tissue>
        <tissue>Stomach</tissue>
    </source>
</reference>
<reference key="2">
    <citation type="submission" date="2005-07" db="EMBL/GenBank/DDBJ databases">
        <authorList>
            <person name="Mural R.J."/>
            <person name="Adams M.D."/>
            <person name="Myers E.W."/>
            <person name="Smith H.O."/>
            <person name="Venter J.C."/>
        </authorList>
    </citation>
    <scope>NUCLEOTIDE SEQUENCE [LARGE SCALE GENOMIC DNA]</scope>
</reference>
<reference key="3">
    <citation type="journal article" date="2004" name="Genome Res.">
        <title>The status, quality, and expansion of the NIH full-length cDNA project: the Mammalian Gene Collection (MGC).</title>
        <authorList>
            <consortium name="The MGC Project Team"/>
        </authorList>
    </citation>
    <scope>NUCLEOTIDE SEQUENCE [LARGE SCALE MRNA]</scope>
</reference>
<reference key="4">
    <citation type="journal article" date="2007" name="Proc. Natl. Acad. Sci. U.S.A.">
        <title>Large-scale phosphorylation analysis of mouse liver.</title>
        <authorList>
            <person name="Villen J."/>
            <person name="Beausoleil S.A."/>
            <person name="Gerber S.A."/>
            <person name="Gygi S.P."/>
        </authorList>
    </citation>
    <scope>PHOSPHORYLATION [LARGE SCALE ANALYSIS] AT SER-173</scope>
    <scope>IDENTIFICATION BY MASS SPECTROMETRY [LARGE SCALE ANALYSIS]</scope>
    <source>
        <tissue>Liver</tissue>
    </source>
</reference>
<reference key="5">
    <citation type="journal article" date="2010" name="Cell">
        <title>A tissue-specific atlas of mouse protein phosphorylation and expression.</title>
        <authorList>
            <person name="Huttlin E.L."/>
            <person name="Jedrychowski M.P."/>
            <person name="Elias J.E."/>
            <person name="Goswami T."/>
            <person name="Rad R."/>
            <person name="Beausoleil S.A."/>
            <person name="Villen J."/>
            <person name="Haas W."/>
            <person name="Sowa M.E."/>
            <person name="Gygi S.P."/>
        </authorList>
    </citation>
    <scope>PHOSPHORYLATION [LARGE SCALE ANALYSIS] AT SER-173</scope>
    <scope>IDENTIFICATION BY MASS SPECTROMETRY [LARGE SCALE ANALYSIS]</scope>
    <source>
        <tissue>Brain</tissue>
        <tissue>Heart</tissue>
        <tissue>Kidney</tissue>
        <tissue>Liver</tissue>
        <tissue>Lung</tissue>
        <tissue>Pancreas</tissue>
        <tissue>Spleen</tissue>
        <tissue>Testis</tissue>
    </source>
</reference>
<feature type="chain" id="PRO_0000089581" description="Gamma-glutamylcyclotransferase">
    <location>
        <begin position="1"/>
        <end position="188"/>
    </location>
</feature>
<feature type="active site" description="Proton acceptor" evidence="2">
    <location>
        <position position="98"/>
    </location>
</feature>
<feature type="binding site" evidence="1 2">
    <location>
        <begin position="19"/>
        <end position="22"/>
    </location>
    <ligand>
        <name>substrate</name>
    </ligand>
</feature>
<feature type="modified residue" description="Phosphoserine" evidence="4 5">
    <location>
        <position position="173"/>
    </location>
</feature>
<feature type="sequence conflict" description="In Ref. 2; EDK98717 and 3; AAH80818." evidence="3" ref="2 3">
    <original>R</original>
    <variation>C</variation>
    <location>
        <position position="45"/>
    </location>
</feature>
<proteinExistence type="evidence at protein level"/>
<name>GGCT_MOUSE</name>
<gene>
    <name type="primary">Ggct</name>
</gene>
<evidence type="ECO:0000250" key="1"/>
<evidence type="ECO:0000250" key="2">
    <source>
        <dbReference type="UniProtKB" id="O75223"/>
    </source>
</evidence>
<evidence type="ECO:0000305" key="3"/>
<evidence type="ECO:0007744" key="4">
    <source>
    </source>
</evidence>
<evidence type="ECO:0007744" key="5">
    <source>
    </source>
</evidence>
<organism>
    <name type="scientific">Mus musculus</name>
    <name type="common">Mouse</name>
    <dbReference type="NCBI Taxonomy" id="10090"/>
    <lineage>
        <taxon>Eukaryota</taxon>
        <taxon>Metazoa</taxon>
        <taxon>Chordata</taxon>
        <taxon>Craniata</taxon>
        <taxon>Vertebrata</taxon>
        <taxon>Euteleostomi</taxon>
        <taxon>Mammalia</taxon>
        <taxon>Eutheria</taxon>
        <taxon>Euarchontoglires</taxon>
        <taxon>Glires</taxon>
        <taxon>Rodentia</taxon>
        <taxon>Myomorpha</taxon>
        <taxon>Muroidea</taxon>
        <taxon>Muridae</taxon>
        <taxon>Murinae</taxon>
        <taxon>Mus</taxon>
        <taxon>Mus</taxon>
    </lineage>
</organism>
<keyword id="KW-0456">Lyase</keyword>
<keyword id="KW-0597">Phosphoprotein</keyword>
<keyword id="KW-1185">Reference proteome</keyword>